<accession>B1JVP0</accession>
<keyword id="KW-0004">4Fe-4S</keyword>
<keyword id="KW-0997">Cell inner membrane</keyword>
<keyword id="KW-1003">Cell membrane</keyword>
<keyword id="KW-0408">Iron</keyword>
<keyword id="KW-0411">Iron-sulfur</keyword>
<keyword id="KW-0472">Membrane</keyword>
<keyword id="KW-0479">Metal-binding</keyword>
<keyword id="KW-0520">NAD</keyword>
<keyword id="KW-0874">Quinone</keyword>
<keyword id="KW-1278">Translocase</keyword>
<keyword id="KW-0813">Transport</keyword>
<keyword id="KW-0830">Ubiquinone</keyword>
<comment type="function">
    <text evidence="1">NDH-1 shuttles electrons from NADH, via FMN and iron-sulfur (Fe-S) centers, to quinones in the respiratory chain. Couples the redox reaction to proton translocation (for every two electrons transferred, four hydrogen ions are translocated across the cytoplasmic membrane), and thus conserves the redox energy in a proton gradient (By similarity).</text>
</comment>
<comment type="catalytic activity">
    <reaction evidence="2">
        <text>a quinone + NADH + 5 H(+)(in) = a quinol + NAD(+) + 4 H(+)(out)</text>
        <dbReference type="Rhea" id="RHEA:57888"/>
        <dbReference type="ChEBI" id="CHEBI:15378"/>
        <dbReference type="ChEBI" id="CHEBI:24646"/>
        <dbReference type="ChEBI" id="CHEBI:57540"/>
        <dbReference type="ChEBI" id="CHEBI:57945"/>
        <dbReference type="ChEBI" id="CHEBI:132124"/>
    </reaction>
</comment>
<comment type="cofactor">
    <cofactor evidence="2">
        <name>[4Fe-4S] cluster</name>
        <dbReference type="ChEBI" id="CHEBI:49883"/>
    </cofactor>
    <text evidence="2">Binds 1 [4Fe-4S] cluster.</text>
</comment>
<comment type="subunit">
    <text evidence="2">NDH-1 is composed of 14 different subunits. Subunits NuoB, C, D, E, F, and G constitute the peripheral sector of the complex.</text>
</comment>
<comment type="subcellular location">
    <subcellularLocation>
        <location evidence="2">Cell inner membrane</location>
        <topology evidence="2">Peripheral membrane protein</topology>
        <orientation evidence="2">Cytoplasmic side</orientation>
    </subcellularLocation>
</comment>
<comment type="similarity">
    <text evidence="2">Belongs to the complex I 20 kDa subunit family.</text>
</comment>
<feature type="chain" id="PRO_0000358367" description="NADH-quinone oxidoreductase subunit B">
    <location>
        <begin position="1"/>
        <end position="159"/>
    </location>
</feature>
<feature type="binding site" evidence="2">
    <location>
        <position position="37"/>
    </location>
    <ligand>
        <name>[4Fe-4S] cluster</name>
        <dbReference type="ChEBI" id="CHEBI:49883"/>
    </ligand>
</feature>
<feature type="binding site" evidence="2">
    <location>
        <position position="38"/>
    </location>
    <ligand>
        <name>[4Fe-4S] cluster</name>
        <dbReference type="ChEBI" id="CHEBI:49883"/>
    </ligand>
</feature>
<feature type="binding site" evidence="2">
    <location>
        <position position="102"/>
    </location>
    <ligand>
        <name>[4Fe-4S] cluster</name>
        <dbReference type="ChEBI" id="CHEBI:49883"/>
    </ligand>
</feature>
<feature type="binding site" evidence="2">
    <location>
        <position position="132"/>
    </location>
    <ligand>
        <name>[4Fe-4S] cluster</name>
        <dbReference type="ChEBI" id="CHEBI:49883"/>
    </ligand>
</feature>
<protein>
    <recommendedName>
        <fullName evidence="2">NADH-quinone oxidoreductase subunit B</fullName>
        <ecNumber evidence="2">7.1.1.-</ecNumber>
    </recommendedName>
    <alternativeName>
        <fullName evidence="2">NADH dehydrogenase I subunit B</fullName>
    </alternativeName>
    <alternativeName>
        <fullName evidence="2">NDH-1 subunit B</fullName>
    </alternativeName>
</protein>
<name>NUOB_BURO0</name>
<evidence type="ECO:0000250" key="1"/>
<evidence type="ECO:0000255" key="2">
    <source>
        <dbReference type="HAMAP-Rule" id="MF_01356"/>
    </source>
</evidence>
<reference key="1">
    <citation type="submission" date="2008-02" db="EMBL/GenBank/DDBJ databases">
        <title>Complete sequence of chromosome 1 of Burkholderia cenocepacia MC0-3.</title>
        <authorList>
            <person name="Copeland A."/>
            <person name="Lucas S."/>
            <person name="Lapidus A."/>
            <person name="Barry K."/>
            <person name="Bruce D."/>
            <person name="Goodwin L."/>
            <person name="Glavina del Rio T."/>
            <person name="Dalin E."/>
            <person name="Tice H."/>
            <person name="Pitluck S."/>
            <person name="Chain P."/>
            <person name="Malfatti S."/>
            <person name="Shin M."/>
            <person name="Vergez L."/>
            <person name="Schmutz J."/>
            <person name="Larimer F."/>
            <person name="Land M."/>
            <person name="Hauser L."/>
            <person name="Kyrpides N."/>
            <person name="Mikhailova N."/>
            <person name="Tiedje J."/>
            <person name="Richardson P."/>
        </authorList>
    </citation>
    <scope>NUCLEOTIDE SEQUENCE [LARGE SCALE GENOMIC DNA]</scope>
    <source>
        <strain>MC0-3</strain>
    </source>
</reference>
<organism>
    <name type="scientific">Burkholderia orbicola (strain MC0-3)</name>
    <dbReference type="NCBI Taxonomy" id="406425"/>
    <lineage>
        <taxon>Bacteria</taxon>
        <taxon>Pseudomonadati</taxon>
        <taxon>Pseudomonadota</taxon>
        <taxon>Betaproteobacteria</taxon>
        <taxon>Burkholderiales</taxon>
        <taxon>Burkholderiaceae</taxon>
        <taxon>Burkholderia</taxon>
        <taxon>Burkholderia cepacia complex</taxon>
        <taxon>Burkholderia orbicola</taxon>
    </lineage>
</organism>
<gene>
    <name evidence="2" type="primary">nuoB</name>
    <name type="ordered locus">Bcenmc03_2272</name>
</gene>
<dbReference type="EC" id="7.1.1.-" evidence="2"/>
<dbReference type="EMBL" id="CP000958">
    <property type="protein sequence ID" value="ACA91433.1"/>
    <property type="molecule type" value="Genomic_DNA"/>
</dbReference>
<dbReference type="RefSeq" id="WP_006398799.1">
    <property type="nucleotide sequence ID" value="NC_010508.1"/>
</dbReference>
<dbReference type="SMR" id="B1JVP0"/>
<dbReference type="KEGG" id="bcm:Bcenmc03_2272"/>
<dbReference type="HOGENOM" id="CLU_055737_7_3_4"/>
<dbReference type="Proteomes" id="UP000002169">
    <property type="component" value="Chromosome 1"/>
</dbReference>
<dbReference type="GO" id="GO:0005886">
    <property type="term" value="C:plasma membrane"/>
    <property type="evidence" value="ECO:0007669"/>
    <property type="project" value="UniProtKB-SubCell"/>
</dbReference>
<dbReference type="GO" id="GO:0045271">
    <property type="term" value="C:respiratory chain complex I"/>
    <property type="evidence" value="ECO:0007669"/>
    <property type="project" value="TreeGrafter"/>
</dbReference>
<dbReference type="GO" id="GO:0051539">
    <property type="term" value="F:4 iron, 4 sulfur cluster binding"/>
    <property type="evidence" value="ECO:0007669"/>
    <property type="project" value="UniProtKB-KW"/>
</dbReference>
<dbReference type="GO" id="GO:0005506">
    <property type="term" value="F:iron ion binding"/>
    <property type="evidence" value="ECO:0007669"/>
    <property type="project" value="UniProtKB-UniRule"/>
</dbReference>
<dbReference type="GO" id="GO:0008137">
    <property type="term" value="F:NADH dehydrogenase (ubiquinone) activity"/>
    <property type="evidence" value="ECO:0007669"/>
    <property type="project" value="InterPro"/>
</dbReference>
<dbReference type="GO" id="GO:0050136">
    <property type="term" value="F:NADH:ubiquinone reductase (non-electrogenic) activity"/>
    <property type="evidence" value="ECO:0007669"/>
    <property type="project" value="UniProtKB-UniRule"/>
</dbReference>
<dbReference type="GO" id="GO:0048038">
    <property type="term" value="F:quinone binding"/>
    <property type="evidence" value="ECO:0007669"/>
    <property type="project" value="UniProtKB-KW"/>
</dbReference>
<dbReference type="GO" id="GO:0009060">
    <property type="term" value="P:aerobic respiration"/>
    <property type="evidence" value="ECO:0007669"/>
    <property type="project" value="TreeGrafter"/>
</dbReference>
<dbReference type="GO" id="GO:0015990">
    <property type="term" value="P:electron transport coupled proton transport"/>
    <property type="evidence" value="ECO:0007669"/>
    <property type="project" value="TreeGrafter"/>
</dbReference>
<dbReference type="FunFam" id="3.40.50.12280:FF:000001">
    <property type="entry name" value="NADH-quinone oxidoreductase subunit B 2"/>
    <property type="match status" value="1"/>
</dbReference>
<dbReference type="Gene3D" id="3.40.50.12280">
    <property type="match status" value="1"/>
</dbReference>
<dbReference type="HAMAP" id="MF_01356">
    <property type="entry name" value="NDH1_NuoB"/>
    <property type="match status" value="1"/>
</dbReference>
<dbReference type="InterPro" id="IPR006137">
    <property type="entry name" value="NADH_UbQ_OxRdtase-like_20kDa"/>
</dbReference>
<dbReference type="InterPro" id="IPR006138">
    <property type="entry name" value="NADH_UQ_OxRdtase_20Kd_su"/>
</dbReference>
<dbReference type="NCBIfam" id="TIGR01957">
    <property type="entry name" value="nuoB_fam"/>
    <property type="match status" value="1"/>
</dbReference>
<dbReference type="NCBIfam" id="NF005012">
    <property type="entry name" value="PRK06411.1"/>
    <property type="match status" value="1"/>
</dbReference>
<dbReference type="PANTHER" id="PTHR11995">
    <property type="entry name" value="NADH DEHYDROGENASE"/>
    <property type="match status" value="1"/>
</dbReference>
<dbReference type="PANTHER" id="PTHR11995:SF14">
    <property type="entry name" value="NADH DEHYDROGENASE [UBIQUINONE] IRON-SULFUR PROTEIN 7, MITOCHONDRIAL"/>
    <property type="match status" value="1"/>
</dbReference>
<dbReference type="Pfam" id="PF01058">
    <property type="entry name" value="Oxidored_q6"/>
    <property type="match status" value="1"/>
</dbReference>
<dbReference type="SUPFAM" id="SSF56770">
    <property type="entry name" value="HydA/Nqo6-like"/>
    <property type="match status" value="1"/>
</dbReference>
<dbReference type="PROSITE" id="PS01150">
    <property type="entry name" value="COMPLEX1_20K"/>
    <property type="match status" value="1"/>
</dbReference>
<proteinExistence type="inferred from homology"/>
<sequence>MSIEGVLKEGFVTTTADKLINWTRTGSLWPMTFGLACCAVEMMHAGAARYDLDRFGVVFRPSPRQSDVMIVAGTLCNKMAPALRRVYDQMAEPRWVISMGSCANGGGYYHYSYSVVRGCDRIVPVDVYVPGCPPTAEALVYGVIQLQAKIRRTNTIARQ</sequence>